<name>UTP4_MOUSE</name>
<gene>
    <name type="primary">Utp4</name>
    <name type="synonym">Cirh1a</name>
    <name type="synonym">Kiaa1988</name>
    <name type="synonym">Tex292</name>
</gene>
<protein>
    <recommendedName>
        <fullName>U3 small nucleolar RNA-associated protein 4 homolog</fullName>
    </recommendedName>
    <alternativeName>
        <fullName>Cirhin</fullName>
    </alternativeName>
    <alternativeName>
        <fullName>Testis-expressed gene 292 protein</fullName>
    </alternativeName>
</protein>
<reference key="1">
    <citation type="journal article" date="2004" name="DNA Res.">
        <title>Prediction of the coding sequences of mouse homologues of KIAA gene: IV. The complete nucleotide sequences of 500 mouse KIAA-homologous cDNAs identified by screening of terminal sequences of cDNA clones randomly sampled from size-fractionated libraries.</title>
        <authorList>
            <person name="Okazaki N."/>
            <person name="Kikuno R."/>
            <person name="Ohara R."/>
            <person name="Inamoto S."/>
            <person name="Koseki H."/>
            <person name="Hiraoka S."/>
            <person name="Saga Y."/>
            <person name="Seino S."/>
            <person name="Nishimura M."/>
            <person name="Kaisho T."/>
            <person name="Hoshino K."/>
            <person name="Kitamura H."/>
            <person name="Nagase T."/>
            <person name="Ohara O."/>
            <person name="Koga H."/>
        </authorList>
    </citation>
    <scope>NUCLEOTIDE SEQUENCE [LARGE SCALE MRNA]</scope>
    <source>
        <tissue>Spleen</tissue>
    </source>
</reference>
<reference key="2">
    <citation type="journal article" date="2004" name="Genome Res.">
        <title>The status, quality, and expansion of the NIH full-length cDNA project: the Mammalian Gene Collection (MGC).</title>
        <authorList>
            <consortium name="The MGC Project Team"/>
        </authorList>
    </citation>
    <scope>NUCLEOTIDE SEQUENCE [LARGE SCALE MRNA]</scope>
    <source>
        <tissue>Brain</tissue>
        <tissue>Mammary tumor</tissue>
    </source>
</reference>
<reference key="3">
    <citation type="journal article" date="1996" name="Mamm. Genome">
        <title>Characterization of genes expressed early in mouse spermatogenesis, isolated from a subtractive cDNA library.</title>
        <authorList>
            <person name="Lopez-Fernandez L.A."/>
            <person name="del Mazo J."/>
        </authorList>
    </citation>
    <scope>NUCLEOTIDE SEQUENCE [MRNA] OF 1-19 AND 643-686</scope>
    <scope>TISSUE SPECIFICITY</scope>
    <scope>DEVELOPMENTAL STAGE</scope>
    <source>
        <strain>SWR/J</strain>
        <tissue>Testis</tissue>
    </source>
</reference>
<reference key="4">
    <citation type="journal article" date="2002" name="Am. J. Hum. Genet.">
        <title>A missense mutation (R565W) in cirhin (FLJ14728) in North American Indian childhood cirrhosis.</title>
        <authorList>
            <person name="Chagnon P."/>
            <person name="Michaud J."/>
            <person name="Mitchell G."/>
            <person name="Mercier J."/>
            <person name="Marion J.-F."/>
            <person name="Drouin E."/>
            <person name="Rasquin-Weber A."/>
            <person name="Hudson T.J."/>
            <person name="Richter A."/>
        </authorList>
    </citation>
    <scope>TISSUE SPECIFICITY</scope>
    <scope>DEVELOPMENTAL STAGE</scope>
</reference>
<accession>Q8R2N2</accession>
<accession>Q62306</accession>
<accession>Q62307</accession>
<accession>Q69Z48</accession>
<accession>Q6NVG9</accession>
<accession>Q8VEL5</accession>
<comment type="function">
    <text evidence="1">Ribosome biogenesis factor. Involved in nucleolar processing of pre-18S ribosomal RNA. Part of the small subunit (SSU) processome, first precursor of the small eukaryotic ribosomal subunit. During the assembly of the SSU processome in the nucleolus, many ribosome biogenesis factors, an RNA chaperone and ribosomal proteins associate with the nascent pre-rRNA and work in concert to generate RNA folding, modifications, rearrangements and cleavage as well as targeted d Involved in SSU pre-rRNA processing at sites A', A0, 1 and 2b. Required for optimal pre-ribosomal RNA transcription by RNA polymerase. May be a transcriptional regulator.</text>
</comment>
<comment type="subunit">
    <text evidence="1">Interacts with HIVEP1 Interacts with NOL11. Part of the small subunit (SSU) processome, composed of more than 70 proteins and the RNA chaperone small nucleolar RNA (snoRNA) U3. May be a component of the proposed t-UTP subcomplex of the ribosomal small subunit (SSU) processome containing at least UTP4, WDR43, HEATR1, UTP15, WDR75.</text>
</comment>
<comment type="subcellular location">
    <subcellularLocation>
        <location evidence="1">Nucleus</location>
        <location evidence="1">Nucleolus</location>
    </subcellularLocation>
    <subcellularLocation>
        <location evidence="1">Chromosome</location>
    </subcellularLocation>
    <text evidence="1">Found predominantly at the fibrillar center.</text>
</comment>
<comment type="tissue specificity">
    <text evidence="2 3">Expressed in liver.</text>
</comment>
<comment type="developmental stage">
    <text evidence="2 3">In 11.5 day embryos, highly and predominantly expressed in liver, with lower expression in somites, brain and craniofacial structures. Expression significantly decreases in 12.5 day embryos and in the newborn.</text>
</comment>
<comment type="PTM">
    <text evidence="1">May be phosphorylated during mitosis; may control the association of this protein with WRD43 and UTP15.</text>
</comment>
<comment type="sequence caution" evidence="4">
    <conflict type="erroneous initiation">
        <sequence resource="EMBL-CDS" id="AAH27399"/>
    </conflict>
    <text>Truncated N-terminus.</text>
</comment>
<comment type="sequence caution" evidence="4">
    <conflict type="erroneous initiation">
        <sequence resource="EMBL-CDS" id="BAD32596"/>
    </conflict>
    <text>Extended N-terminus.</text>
</comment>
<comment type="sequence caution" evidence="4">
    <conflict type="frameshift">
        <sequence resource="EMBL-CDS" id="CAA56628"/>
    </conflict>
</comment>
<comment type="sequence caution" evidence="4">
    <conflict type="erroneous initiation">
        <sequence resource="EMBL-CDS" id="CAA56629"/>
    </conflict>
    <text>Extended N-terminus.</text>
</comment>
<comment type="sequence caution" evidence="4">
    <conflict type="frameshift">
        <sequence resource="EMBL-CDS" id="CAA56629"/>
    </conflict>
</comment>
<sequence>MGEFKVHRVRFFNYVPSGIRCVAYNNQSNRLAVSRTDGTVEIYNLSANYFQEKFFPGHESRGTEALCWAGGQRLFSAGLNGEILEYDLQALNIKYTLDAFGGPIWSMTASPSGSQLLVGCEDGSVKLFEVTPEKIQFARNFDRQKSRILSLCWHPAGTHVAAGSLDYISVFDVKSGSIIRKMVLDRQHLGVTKSRCIVWGVAFLSDGTVISVDSVGKVQLWDSATGTLVKSHLVANADVQSIAVADQEDSFVVGTAEGTVFHFQLVSMTSNSSEKQWVRTKPFQHHTHDVRAVAHSPTALISGGTDTHLVIRPLMERVEVKNYDAALRKITFPHRRLISCSKRRQLLLFQFAHHLELWRLGSTSATGKNGDTLPLSKNADHLLHLKTKGPENIICSCVSPCGSWIAYSTASRFFLYRLKYERDNISLQRVSKLPSFLRSALHILFSEDSTKLLVASNQGSLHIVHLSEGSFKHLHTFQPQSGTVEAMCLLAVSPDGNWLAASGTSAGVHVYDLHHLKLHCTVPAYNFPVTALAIAPNTNNLVIAHSDQQVFEFSIPEKQYTEWSRSLQKQGFHQLWLQRDTPITHISFHPKRPMHILLHDAYMFCIIDKSLPLPNEKTVLYNPLPPKNESDVFLRRTTHGFKMSKIYKPLLFMDLLDERTLVAVERPLDDIIAQLPPPIKKKKFGT</sequence>
<proteinExistence type="evidence at transcript level"/>
<organism>
    <name type="scientific">Mus musculus</name>
    <name type="common">Mouse</name>
    <dbReference type="NCBI Taxonomy" id="10090"/>
    <lineage>
        <taxon>Eukaryota</taxon>
        <taxon>Metazoa</taxon>
        <taxon>Chordata</taxon>
        <taxon>Craniata</taxon>
        <taxon>Vertebrata</taxon>
        <taxon>Euteleostomi</taxon>
        <taxon>Mammalia</taxon>
        <taxon>Eutheria</taxon>
        <taxon>Euarchontoglires</taxon>
        <taxon>Glires</taxon>
        <taxon>Rodentia</taxon>
        <taxon>Myomorpha</taxon>
        <taxon>Muroidea</taxon>
        <taxon>Muridae</taxon>
        <taxon>Murinae</taxon>
        <taxon>Mus</taxon>
        <taxon>Mus</taxon>
    </lineage>
</organism>
<feature type="chain" id="PRO_0000050909" description="U3 small nucleolar RNA-associated protein 4 homolog">
    <location>
        <begin position="1"/>
        <end position="686"/>
    </location>
</feature>
<feature type="repeat" description="WD 1">
    <location>
        <begin position="14"/>
        <end position="53"/>
    </location>
</feature>
<feature type="repeat" description="WD 2">
    <location>
        <begin position="57"/>
        <end position="96"/>
    </location>
</feature>
<feature type="repeat" description="WD 3">
    <location>
        <begin position="99"/>
        <end position="138"/>
    </location>
</feature>
<feature type="repeat" description="WD 4">
    <location>
        <begin position="143"/>
        <end position="181"/>
    </location>
</feature>
<feature type="repeat" description="WD 5">
    <location>
        <begin position="193"/>
        <end position="231"/>
    </location>
</feature>
<feature type="repeat" description="WD 6">
    <location>
        <begin position="234"/>
        <end position="273"/>
    </location>
</feature>
<feature type="repeat" description="WD 7">
    <location>
        <begin position="285"/>
        <end position="322"/>
    </location>
</feature>
<feature type="repeat" description="WD 8">
    <location>
        <begin position="324"/>
        <end position="359"/>
    </location>
</feature>
<feature type="repeat" description="WD 9">
    <location>
        <begin position="435"/>
        <end position="474"/>
    </location>
</feature>
<feature type="repeat" description="WD 10">
    <location>
        <begin position="482"/>
        <end position="521"/>
    </location>
</feature>
<feature type="repeat" description="WD 11">
    <location>
        <begin position="524"/>
        <end position="563"/>
    </location>
</feature>
<feature type="cross-link" description="Glycyl lysine isopeptide (Lys-Gly) (interchain with G-Cter in SUMO2)" evidence="1">
    <location>
        <position position="321"/>
    </location>
</feature>
<keyword id="KW-0158">Chromosome</keyword>
<keyword id="KW-1017">Isopeptide bond</keyword>
<keyword id="KW-0539">Nucleus</keyword>
<keyword id="KW-0597">Phosphoprotein</keyword>
<keyword id="KW-1185">Reference proteome</keyword>
<keyword id="KW-0677">Repeat</keyword>
<keyword id="KW-0690">Ribosome biogenesis</keyword>
<keyword id="KW-0698">rRNA processing</keyword>
<keyword id="KW-0804">Transcription</keyword>
<keyword id="KW-0805">Transcription regulation</keyword>
<keyword id="KW-0832">Ubl conjugation</keyword>
<keyword id="KW-0853">WD repeat</keyword>
<evidence type="ECO:0000250" key="1">
    <source>
        <dbReference type="UniProtKB" id="Q969X6"/>
    </source>
</evidence>
<evidence type="ECO:0000269" key="2">
    <source>
    </source>
</evidence>
<evidence type="ECO:0000269" key="3">
    <source>
    </source>
</evidence>
<evidence type="ECO:0000305" key="4"/>
<dbReference type="EMBL" id="AK173318">
    <property type="protein sequence ID" value="BAD32596.1"/>
    <property type="status" value="ALT_INIT"/>
    <property type="molecule type" value="mRNA"/>
</dbReference>
<dbReference type="EMBL" id="BC018262">
    <property type="protein sequence ID" value="AAH18262.1"/>
    <property type="molecule type" value="mRNA"/>
</dbReference>
<dbReference type="EMBL" id="BC027399">
    <property type="protein sequence ID" value="AAH27399.1"/>
    <property type="status" value="ALT_INIT"/>
    <property type="molecule type" value="mRNA"/>
</dbReference>
<dbReference type="EMBL" id="BC068113">
    <property type="protein sequence ID" value="AAH68113.1"/>
    <property type="molecule type" value="mRNA"/>
</dbReference>
<dbReference type="EMBL" id="X80433">
    <property type="protein sequence ID" value="CAA56628.1"/>
    <property type="status" value="ALT_FRAME"/>
    <property type="molecule type" value="mRNA"/>
</dbReference>
<dbReference type="EMBL" id="X80434">
    <property type="protein sequence ID" value="CAA56629.1"/>
    <property type="status" value="ALT_SEQ"/>
    <property type="molecule type" value="mRNA"/>
</dbReference>
<dbReference type="CCDS" id="CCDS52664.1"/>
<dbReference type="PIR" id="S46930">
    <property type="entry name" value="S46930"/>
</dbReference>
<dbReference type="RefSeq" id="NP_001345911.1">
    <property type="nucleotide sequence ID" value="NM_001358982.1"/>
</dbReference>
<dbReference type="RefSeq" id="NP_035704.2">
    <property type="nucleotide sequence ID" value="NM_011574.2"/>
</dbReference>
<dbReference type="RefSeq" id="XP_006530905.1">
    <property type="nucleotide sequence ID" value="XM_006530842.3"/>
</dbReference>
<dbReference type="SMR" id="Q8R2N2"/>
<dbReference type="BioGRID" id="204134">
    <property type="interactions" value="1"/>
</dbReference>
<dbReference type="FunCoup" id="Q8R2N2">
    <property type="interactions" value="2577"/>
</dbReference>
<dbReference type="IntAct" id="Q8R2N2">
    <property type="interactions" value="1"/>
</dbReference>
<dbReference type="STRING" id="10090.ENSMUSP00000048377"/>
<dbReference type="iPTMnet" id="Q8R2N2"/>
<dbReference type="PhosphoSitePlus" id="Q8R2N2"/>
<dbReference type="SwissPalm" id="Q8R2N2"/>
<dbReference type="PaxDb" id="10090-ENSMUSP00000048377"/>
<dbReference type="PeptideAtlas" id="Q8R2N2"/>
<dbReference type="ProteomicsDB" id="275399"/>
<dbReference type="Pumba" id="Q8R2N2"/>
<dbReference type="Antibodypedia" id="29826">
    <property type="antibodies" value="118 antibodies from 21 providers"/>
</dbReference>
<dbReference type="DNASU" id="21771"/>
<dbReference type="Ensembl" id="ENSMUST00000047629.7">
    <property type="protein sequence ID" value="ENSMUSP00000048377.6"/>
    <property type="gene ID" value="ENSMUSG00000041438.9"/>
</dbReference>
<dbReference type="GeneID" id="21771"/>
<dbReference type="KEGG" id="mmu:21771"/>
<dbReference type="UCSC" id="uc009ngr.2">
    <property type="organism name" value="mouse"/>
</dbReference>
<dbReference type="AGR" id="MGI:1096573"/>
<dbReference type="CTD" id="84916"/>
<dbReference type="MGI" id="MGI:1096573">
    <property type="gene designation" value="Utp4"/>
</dbReference>
<dbReference type="VEuPathDB" id="HostDB:ENSMUSG00000041438"/>
<dbReference type="eggNOG" id="KOG2048">
    <property type="taxonomic scope" value="Eukaryota"/>
</dbReference>
<dbReference type="GeneTree" id="ENSGT00940000153533"/>
<dbReference type="HOGENOM" id="CLU_002392_3_0_1"/>
<dbReference type="InParanoid" id="Q8R2N2"/>
<dbReference type="OMA" id="STYITEW"/>
<dbReference type="OrthoDB" id="8883818at2759"/>
<dbReference type="PhylomeDB" id="Q8R2N2"/>
<dbReference type="TreeFam" id="TF313159"/>
<dbReference type="Reactome" id="R-MMU-6791226">
    <property type="pathway name" value="Major pathway of rRNA processing in the nucleolus and cytosol"/>
</dbReference>
<dbReference type="BioGRID-ORCS" id="21771">
    <property type="hits" value="27 hits in 76 CRISPR screens"/>
</dbReference>
<dbReference type="ChiTaRS" id="Cirh1a">
    <property type="organism name" value="mouse"/>
</dbReference>
<dbReference type="PRO" id="PR:Q8R2N2"/>
<dbReference type="Proteomes" id="UP000000589">
    <property type="component" value="Chromosome 8"/>
</dbReference>
<dbReference type="RNAct" id="Q8R2N2">
    <property type="molecule type" value="protein"/>
</dbReference>
<dbReference type="Bgee" id="ENSMUSG00000041438">
    <property type="expression patterns" value="Expressed in primary oocyte and 263 other cell types or tissues"/>
</dbReference>
<dbReference type="ExpressionAtlas" id="Q8R2N2">
    <property type="expression patterns" value="baseline and differential"/>
</dbReference>
<dbReference type="GO" id="GO:0030686">
    <property type="term" value="C:90S preribosome"/>
    <property type="evidence" value="ECO:0007669"/>
    <property type="project" value="InterPro"/>
</dbReference>
<dbReference type="GO" id="GO:0005694">
    <property type="term" value="C:chromosome"/>
    <property type="evidence" value="ECO:0000250"/>
    <property type="project" value="UniProtKB"/>
</dbReference>
<dbReference type="GO" id="GO:0001650">
    <property type="term" value="C:fibrillar center"/>
    <property type="evidence" value="ECO:0000250"/>
    <property type="project" value="UniProtKB"/>
</dbReference>
<dbReference type="GO" id="GO:0005730">
    <property type="term" value="C:nucleolus"/>
    <property type="evidence" value="ECO:0000250"/>
    <property type="project" value="UniProtKB"/>
</dbReference>
<dbReference type="GO" id="GO:0032040">
    <property type="term" value="C:small-subunit processome"/>
    <property type="evidence" value="ECO:0000250"/>
    <property type="project" value="UniProtKB"/>
</dbReference>
<dbReference type="GO" id="GO:0034455">
    <property type="term" value="C:t-UTP complex"/>
    <property type="evidence" value="ECO:0000250"/>
    <property type="project" value="UniProtKB"/>
</dbReference>
<dbReference type="GO" id="GO:0030490">
    <property type="term" value="P:maturation of SSU-rRNA"/>
    <property type="evidence" value="ECO:0000250"/>
    <property type="project" value="UniProtKB"/>
</dbReference>
<dbReference type="GO" id="GO:0000462">
    <property type="term" value="P:maturation of SSU-rRNA from tricistronic rRNA transcript (SSU-rRNA, 5.8S rRNA, LSU-rRNA)"/>
    <property type="evidence" value="ECO:0007669"/>
    <property type="project" value="InterPro"/>
</dbReference>
<dbReference type="GO" id="GO:0006355">
    <property type="term" value="P:regulation of DNA-templated transcription"/>
    <property type="evidence" value="ECO:0007669"/>
    <property type="project" value="Ensembl"/>
</dbReference>
<dbReference type="GO" id="GO:0042274">
    <property type="term" value="P:ribosomal small subunit biogenesis"/>
    <property type="evidence" value="ECO:0000250"/>
    <property type="project" value="UniProtKB"/>
</dbReference>
<dbReference type="FunFam" id="2.130.10.10:FF:000367">
    <property type="entry name" value="U3 small nucleolar RNA-associated protein 4 homolog"/>
    <property type="match status" value="1"/>
</dbReference>
<dbReference type="FunFam" id="2.130.10.10:FF:000441">
    <property type="entry name" value="U3 small nucleolar RNA-associated protein 4 homolog"/>
    <property type="match status" value="1"/>
</dbReference>
<dbReference type="FunFam" id="2.130.10.10:FF:000617">
    <property type="entry name" value="U3 small nucleolar RNA-associated protein 4 homolog"/>
    <property type="match status" value="1"/>
</dbReference>
<dbReference type="Gene3D" id="2.130.10.10">
    <property type="entry name" value="YVTN repeat-like/Quinoprotein amine dehydrogenase"/>
    <property type="match status" value="3"/>
</dbReference>
<dbReference type="InterPro" id="IPR046351">
    <property type="entry name" value="UTP4"/>
</dbReference>
<dbReference type="InterPro" id="IPR015943">
    <property type="entry name" value="WD40/YVTN_repeat-like_dom_sf"/>
</dbReference>
<dbReference type="InterPro" id="IPR036322">
    <property type="entry name" value="WD40_repeat_dom_sf"/>
</dbReference>
<dbReference type="InterPro" id="IPR001680">
    <property type="entry name" value="WD40_rpt"/>
</dbReference>
<dbReference type="PANTHER" id="PTHR44163">
    <property type="entry name" value="U3 SMALL NUCLEOLAR RNA-ASSOCIATED PROTEIN 4 HOMOLOG"/>
    <property type="match status" value="1"/>
</dbReference>
<dbReference type="PANTHER" id="PTHR44163:SF1">
    <property type="entry name" value="U3 SMALL NUCLEOLAR RNA-ASSOCIATED PROTEIN 4 HOMOLOG"/>
    <property type="match status" value="1"/>
</dbReference>
<dbReference type="Pfam" id="PF00400">
    <property type="entry name" value="WD40"/>
    <property type="match status" value="3"/>
</dbReference>
<dbReference type="SMART" id="SM00320">
    <property type="entry name" value="WD40"/>
    <property type="match status" value="10"/>
</dbReference>
<dbReference type="SUPFAM" id="SSF82171">
    <property type="entry name" value="DPP6 N-terminal domain-like"/>
    <property type="match status" value="1"/>
</dbReference>
<dbReference type="SUPFAM" id="SSF50978">
    <property type="entry name" value="WD40 repeat-like"/>
    <property type="match status" value="1"/>
</dbReference>
<dbReference type="PROSITE" id="PS50294">
    <property type="entry name" value="WD_REPEATS_REGION"/>
    <property type="match status" value="1"/>
</dbReference>